<dbReference type="EMBL" id="AM408590">
    <property type="protein sequence ID" value="CAL73498.1"/>
    <property type="molecule type" value="Genomic_DNA"/>
</dbReference>
<dbReference type="RefSeq" id="WP_003418312.1">
    <property type="nucleotide sequence ID" value="NC_008769.1"/>
</dbReference>
<dbReference type="SMR" id="A1KPD0"/>
<dbReference type="GeneID" id="45427433"/>
<dbReference type="KEGG" id="mbb:BCG_3509c"/>
<dbReference type="HOGENOM" id="CLU_082184_2_2_11"/>
<dbReference type="Proteomes" id="UP000001472">
    <property type="component" value="Chromosome"/>
</dbReference>
<dbReference type="GO" id="GO:0022625">
    <property type="term" value="C:cytosolic large ribosomal subunit"/>
    <property type="evidence" value="ECO:0007669"/>
    <property type="project" value="TreeGrafter"/>
</dbReference>
<dbReference type="GO" id="GO:0003729">
    <property type="term" value="F:mRNA binding"/>
    <property type="evidence" value="ECO:0007669"/>
    <property type="project" value="TreeGrafter"/>
</dbReference>
<dbReference type="GO" id="GO:0003735">
    <property type="term" value="F:structural constituent of ribosome"/>
    <property type="evidence" value="ECO:0007669"/>
    <property type="project" value="InterPro"/>
</dbReference>
<dbReference type="GO" id="GO:0017148">
    <property type="term" value="P:negative regulation of translation"/>
    <property type="evidence" value="ECO:0007669"/>
    <property type="project" value="TreeGrafter"/>
</dbReference>
<dbReference type="GO" id="GO:0006412">
    <property type="term" value="P:translation"/>
    <property type="evidence" value="ECO:0007669"/>
    <property type="project" value="UniProtKB-UniRule"/>
</dbReference>
<dbReference type="CDD" id="cd00392">
    <property type="entry name" value="Ribosomal_L13"/>
    <property type="match status" value="1"/>
</dbReference>
<dbReference type="FunFam" id="3.90.1180.10:FF:000001">
    <property type="entry name" value="50S ribosomal protein L13"/>
    <property type="match status" value="1"/>
</dbReference>
<dbReference type="Gene3D" id="3.90.1180.10">
    <property type="entry name" value="Ribosomal protein L13"/>
    <property type="match status" value="1"/>
</dbReference>
<dbReference type="HAMAP" id="MF_01366">
    <property type="entry name" value="Ribosomal_uL13"/>
    <property type="match status" value="1"/>
</dbReference>
<dbReference type="InterPro" id="IPR005822">
    <property type="entry name" value="Ribosomal_uL13"/>
</dbReference>
<dbReference type="InterPro" id="IPR005823">
    <property type="entry name" value="Ribosomal_uL13_bac-type"/>
</dbReference>
<dbReference type="InterPro" id="IPR023563">
    <property type="entry name" value="Ribosomal_uL13_CS"/>
</dbReference>
<dbReference type="InterPro" id="IPR036899">
    <property type="entry name" value="Ribosomal_uL13_sf"/>
</dbReference>
<dbReference type="NCBIfam" id="TIGR01066">
    <property type="entry name" value="rplM_bact"/>
    <property type="match status" value="1"/>
</dbReference>
<dbReference type="PANTHER" id="PTHR11545:SF2">
    <property type="entry name" value="LARGE RIBOSOMAL SUBUNIT PROTEIN UL13M"/>
    <property type="match status" value="1"/>
</dbReference>
<dbReference type="PANTHER" id="PTHR11545">
    <property type="entry name" value="RIBOSOMAL PROTEIN L13"/>
    <property type="match status" value="1"/>
</dbReference>
<dbReference type="Pfam" id="PF00572">
    <property type="entry name" value="Ribosomal_L13"/>
    <property type="match status" value="1"/>
</dbReference>
<dbReference type="PIRSF" id="PIRSF002181">
    <property type="entry name" value="Ribosomal_L13"/>
    <property type="match status" value="1"/>
</dbReference>
<dbReference type="SUPFAM" id="SSF52161">
    <property type="entry name" value="Ribosomal protein L13"/>
    <property type="match status" value="1"/>
</dbReference>
<dbReference type="PROSITE" id="PS00783">
    <property type="entry name" value="RIBOSOMAL_L13"/>
    <property type="match status" value="1"/>
</dbReference>
<sequence length="147" mass="16337">MPTYAPKAGDTTRSWYVIDATDVVLGRLAVAAANLLRGKHKPTFAPNVDGGDFVIVINADKVAISGDKLQHKMVYRHSGYPGGLHKRTIGELMQRHPDRVVEKAILGMLPKNRLSRQIQRKLRVYAGPEHPHSAQQPVPYELKQVAQ</sequence>
<organism>
    <name type="scientific">Mycobacterium bovis (strain BCG / Pasteur 1173P2)</name>
    <dbReference type="NCBI Taxonomy" id="410289"/>
    <lineage>
        <taxon>Bacteria</taxon>
        <taxon>Bacillati</taxon>
        <taxon>Actinomycetota</taxon>
        <taxon>Actinomycetes</taxon>
        <taxon>Mycobacteriales</taxon>
        <taxon>Mycobacteriaceae</taxon>
        <taxon>Mycobacterium</taxon>
        <taxon>Mycobacterium tuberculosis complex</taxon>
    </lineage>
</organism>
<keyword id="KW-0687">Ribonucleoprotein</keyword>
<keyword id="KW-0689">Ribosomal protein</keyword>
<reference key="1">
    <citation type="journal article" date="2007" name="Proc. Natl. Acad. Sci. U.S.A.">
        <title>Genome plasticity of BCG and impact on vaccine efficacy.</title>
        <authorList>
            <person name="Brosch R."/>
            <person name="Gordon S.V."/>
            <person name="Garnier T."/>
            <person name="Eiglmeier K."/>
            <person name="Frigui W."/>
            <person name="Valenti P."/>
            <person name="Dos Santos S."/>
            <person name="Duthoy S."/>
            <person name="Lacroix C."/>
            <person name="Garcia-Pelayo C."/>
            <person name="Inwald J.K."/>
            <person name="Golby P."/>
            <person name="Garcia J.N."/>
            <person name="Hewinson R.G."/>
            <person name="Behr M.A."/>
            <person name="Quail M.A."/>
            <person name="Churcher C."/>
            <person name="Barrell B.G."/>
            <person name="Parkhill J."/>
            <person name="Cole S.T."/>
        </authorList>
    </citation>
    <scope>NUCLEOTIDE SEQUENCE [LARGE SCALE GENOMIC DNA]</scope>
    <source>
        <strain>BCG / Pasteur 1173P2</strain>
    </source>
</reference>
<proteinExistence type="inferred from homology"/>
<gene>
    <name evidence="1" type="primary">rplM</name>
    <name type="ordered locus">BCG_3509c</name>
</gene>
<comment type="function">
    <text evidence="1">This protein is one of the early assembly proteins of the 50S ribosomal subunit, although it is not seen to bind rRNA by itself. It is important during the early stages of 50S assembly.</text>
</comment>
<comment type="subunit">
    <text evidence="1">Part of the 50S ribosomal subunit.</text>
</comment>
<comment type="similarity">
    <text evidence="1">Belongs to the universal ribosomal protein uL13 family.</text>
</comment>
<protein>
    <recommendedName>
        <fullName evidence="1">Large ribosomal subunit protein uL13</fullName>
    </recommendedName>
    <alternativeName>
        <fullName evidence="3">50S ribosomal protein L13</fullName>
    </alternativeName>
</protein>
<name>RL13_MYCBP</name>
<feature type="chain" id="PRO_1000055408" description="Large ribosomal subunit protein uL13">
    <location>
        <begin position="1"/>
        <end position="147"/>
    </location>
</feature>
<feature type="region of interest" description="Disordered" evidence="2">
    <location>
        <begin position="128"/>
        <end position="147"/>
    </location>
</feature>
<accession>A1KPD0</accession>
<evidence type="ECO:0000255" key="1">
    <source>
        <dbReference type="HAMAP-Rule" id="MF_01366"/>
    </source>
</evidence>
<evidence type="ECO:0000256" key="2">
    <source>
        <dbReference type="SAM" id="MobiDB-lite"/>
    </source>
</evidence>
<evidence type="ECO:0000305" key="3"/>